<keyword id="KW-0025">Alternative splicing</keyword>
<keyword id="KW-0067">ATP-binding</keyword>
<keyword id="KW-1015">Disulfide bond</keyword>
<keyword id="KW-0325">Glycoprotein</keyword>
<keyword id="KW-0333">Golgi apparatus</keyword>
<keyword id="KW-0418">Kinase</keyword>
<keyword id="KW-0464">Manganese</keyword>
<keyword id="KW-0472">Membrane</keyword>
<keyword id="KW-0479">Metal-binding</keyword>
<keyword id="KW-0547">Nucleotide-binding</keyword>
<keyword id="KW-1185">Reference proteome</keyword>
<keyword id="KW-0964">Secreted</keyword>
<keyword id="KW-0723">Serine/threonine-protein kinase</keyword>
<keyword id="KW-0735">Signal-anchor</keyword>
<keyword id="KW-0808">Transferase</keyword>
<keyword id="KW-0812">Transmembrane</keyword>
<keyword id="KW-1133">Transmembrane helix</keyword>
<name>FA20C_DROME</name>
<evidence type="ECO:0000250" key="1">
    <source>
        <dbReference type="UniProtKB" id="Q8IXL6"/>
    </source>
</evidence>
<evidence type="ECO:0000250" key="2">
    <source>
        <dbReference type="UniProtKB" id="Q9XTW2"/>
    </source>
</evidence>
<evidence type="ECO:0000255" key="3"/>
<evidence type="ECO:0000255" key="4">
    <source>
        <dbReference type="PROSITE-ProRule" id="PRU00498"/>
    </source>
</evidence>
<evidence type="ECO:0000256" key="5">
    <source>
        <dbReference type="SAM" id="MobiDB-lite"/>
    </source>
</evidence>
<evidence type="ECO:0000269" key="6">
    <source>
    </source>
</evidence>
<evidence type="ECO:0000303" key="7">
    <source>
    </source>
</evidence>
<evidence type="ECO:0000305" key="8"/>
<evidence type="ECO:0000312" key="9">
    <source>
        <dbReference type="EMBL" id="ABP87895.1"/>
    </source>
</evidence>
<evidence type="ECO:0000312" key="10">
    <source>
        <dbReference type="FlyBase" id="FBgn0051145"/>
    </source>
</evidence>
<protein>
    <recommendedName>
        <fullName evidence="8">Extracellular serine/threonine protein CG31145</fullName>
        <ecNumber evidence="7">2.7.11.1</ecNumber>
    </recommendedName>
    <alternativeName>
        <fullName evidence="1">Golgi casein kinase</fullName>
    </alternativeName>
    <alternativeName>
        <fullName evidence="1">Golgi-enriched fraction casein kinase</fullName>
        <shortName evidence="1">GEF-CK</shortName>
    </alternativeName>
</protein>
<gene>
    <name evidence="10" type="ORF">CG31145</name>
</gene>
<accession>A4VCL2</accession>
<accession>B7Z0P4</accession>
<accession>B7Z0P6</accession>
<accession>C1C534</accession>
<accession>Q9VCK5</accession>
<comment type="function">
    <text evidence="1 2 7">Golgi serine/threonine protein kinase that phosphorylates secretory pathway proteins within Ser-x-Glu/pSer motifs.</text>
</comment>
<comment type="catalytic activity">
    <reaction evidence="7">
        <text>L-seryl-[protein] + ATP = O-phospho-L-seryl-[protein] + ADP + H(+)</text>
        <dbReference type="Rhea" id="RHEA:17989"/>
        <dbReference type="Rhea" id="RHEA-COMP:9863"/>
        <dbReference type="Rhea" id="RHEA-COMP:11604"/>
        <dbReference type="ChEBI" id="CHEBI:15378"/>
        <dbReference type="ChEBI" id="CHEBI:29999"/>
        <dbReference type="ChEBI" id="CHEBI:30616"/>
        <dbReference type="ChEBI" id="CHEBI:83421"/>
        <dbReference type="ChEBI" id="CHEBI:456216"/>
        <dbReference type="EC" id="2.7.11.1"/>
    </reaction>
</comment>
<comment type="catalytic activity">
    <reaction evidence="7">
        <text>L-threonyl-[protein] + ATP = O-phospho-L-threonyl-[protein] + ADP + H(+)</text>
        <dbReference type="Rhea" id="RHEA:46608"/>
        <dbReference type="Rhea" id="RHEA-COMP:11060"/>
        <dbReference type="Rhea" id="RHEA-COMP:11605"/>
        <dbReference type="ChEBI" id="CHEBI:15378"/>
        <dbReference type="ChEBI" id="CHEBI:30013"/>
        <dbReference type="ChEBI" id="CHEBI:30616"/>
        <dbReference type="ChEBI" id="CHEBI:61977"/>
        <dbReference type="ChEBI" id="CHEBI:456216"/>
        <dbReference type="EC" id="2.7.11.1"/>
    </reaction>
</comment>
<comment type="cofactor">
    <cofactor evidence="2">
        <name>Mn(2+)</name>
        <dbReference type="ChEBI" id="CHEBI:29035"/>
    </cofactor>
</comment>
<comment type="subcellular location">
    <subcellularLocation>
        <location evidence="6">Golgi apparatus membrane</location>
        <topology evidence="1">Single-pass type II membrane protein</topology>
    </subcellularLocation>
    <subcellularLocation>
        <location evidence="1">Secreted</location>
    </subcellularLocation>
    <text evidence="1">Resides in the Golgi apparatus membrane and is secreted following propeptide cleavage.</text>
</comment>
<comment type="alternative products">
    <event type="alternative splicing"/>
    <isoform>
        <id>A4VCL2-2</id>
        <name>A</name>
        <name>B</name>
        <name>F</name>
        <sequence type="displayed"/>
    </isoform>
    <isoform>
        <id>A4VCL2-1</id>
        <name>C</name>
        <sequence type="described" ref="VSP_061589"/>
    </isoform>
    <isoform>
        <id>A4VCL2-3</id>
        <name>D</name>
        <sequence type="described" ref="VSP_061589 VSP_061590 VSP_061591"/>
    </isoform>
</comment>
<comment type="tissue specificity">
    <text evidence="6">In embryos, prominently expressed in midline glia, salivary gland, intestine and dorsal vessel (heart). Not associated with biomineralization.</text>
</comment>
<comment type="similarity">
    <text evidence="8">Belongs to the FAM20 family.</text>
</comment>
<dbReference type="EC" id="2.7.11.1" evidence="7"/>
<dbReference type="EMBL" id="AE014297">
    <property type="protein sequence ID" value="AAF56153.2"/>
    <property type="molecule type" value="Genomic_DNA"/>
</dbReference>
<dbReference type="EMBL" id="AE014297">
    <property type="protein sequence ID" value="AAO41595.1"/>
    <property type="molecule type" value="Genomic_DNA"/>
</dbReference>
<dbReference type="EMBL" id="AE014297">
    <property type="protein sequence ID" value="ACL83557.1"/>
    <property type="molecule type" value="Genomic_DNA"/>
</dbReference>
<dbReference type="EMBL" id="AE014297">
    <property type="protein sequence ID" value="ACL83558.1"/>
    <property type="molecule type" value="Genomic_DNA"/>
</dbReference>
<dbReference type="EMBL" id="AE014297">
    <property type="protein sequence ID" value="ACL83559.2"/>
    <property type="molecule type" value="Genomic_DNA"/>
</dbReference>
<dbReference type="EMBL" id="BT003468">
    <property type="protein sequence ID" value="AAO39471.1"/>
    <property type="molecule type" value="mRNA"/>
</dbReference>
<dbReference type="EMBL" id="BT030453">
    <property type="protein sequence ID" value="ABP87895.1"/>
    <property type="molecule type" value="mRNA"/>
</dbReference>
<dbReference type="EMBL" id="BT081963">
    <property type="protein sequence ID" value="ACO52094.1"/>
    <property type="molecule type" value="mRNA"/>
</dbReference>
<dbReference type="RefSeq" id="NP_001138101.1">
    <molecule id="A4VCL2-1"/>
    <property type="nucleotide sequence ID" value="NM_001144629.3"/>
</dbReference>
<dbReference type="RefSeq" id="NP_001138102.1">
    <molecule id="A4VCL2-3"/>
    <property type="nucleotide sequence ID" value="NM_001144630.2"/>
</dbReference>
<dbReference type="RefSeq" id="NP_001138103.2">
    <molecule id="A4VCL2-2"/>
    <property type="nucleotide sequence ID" value="NM_001144631.2"/>
</dbReference>
<dbReference type="RefSeq" id="NP_732884.2">
    <molecule id="A4VCL2-2"/>
    <property type="nucleotide sequence ID" value="NM_170079.4"/>
</dbReference>
<dbReference type="RefSeq" id="NP_788724.1">
    <molecule id="A4VCL2-2"/>
    <property type="nucleotide sequence ID" value="NM_176547.3"/>
</dbReference>
<dbReference type="SMR" id="A4VCL2"/>
<dbReference type="FunCoup" id="A4VCL2">
    <property type="interactions" value="15"/>
</dbReference>
<dbReference type="IntAct" id="A4VCL2">
    <property type="interactions" value="1"/>
</dbReference>
<dbReference type="STRING" id="7227.FBpp0423142"/>
<dbReference type="GlyGen" id="A4VCL2">
    <property type="glycosylation" value="4 sites"/>
</dbReference>
<dbReference type="PaxDb" id="7227-FBpp0288495"/>
<dbReference type="DNASU" id="42784"/>
<dbReference type="EnsemblMetazoa" id="FBtr0084479">
    <molecule id="A4VCL2-2"/>
    <property type="protein sequence ID" value="FBpp0083870"/>
    <property type="gene ID" value="FBgn0051145"/>
</dbReference>
<dbReference type="EnsemblMetazoa" id="FBtr0084480">
    <molecule id="A4VCL2-2"/>
    <property type="protein sequence ID" value="FBpp0083871"/>
    <property type="gene ID" value="FBgn0051145"/>
</dbReference>
<dbReference type="EnsemblMetazoa" id="FBtr0290056">
    <molecule id="A4VCL2-1"/>
    <property type="protein sequence ID" value="FBpp0288495"/>
    <property type="gene ID" value="FBgn0051145"/>
</dbReference>
<dbReference type="EnsemblMetazoa" id="FBtr0290057">
    <molecule id="A4VCL2-3"/>
    <property type="protein sequence ID" value="FBpp0288496"/>
    <property type="gene ID" value="FBgn0051145"/>
</dbReference>
<dbReference type="EnsemblMetazoa" id="FBtr0336459">
    <molecule id="A4VCL2-2"/>
    <property type="protein sequence ID" value="FBpp0307565"/>
    <property type="gene ID" value="FBgn0051145"/>
</dbReference>
<dbReference type="GeneID" id="42784"/>
<dbReference type="KEGG" id="dme:Dmel_CG31145"/>
<dbReference type="UCSC" id="CG31145-RA">
    <property type="organism name" value="d. melanogaster"/>
</dbReference>
<dbReference type="AGR" id="FB:FBgn0051145"/>
<dbReference type="FlyBase" id="FBgn0051145">
    <property type="gene designation" value="CG31145"/>
</dbReference>
<dbReference type="VEuPathDB" id="VectorBase:FBgn0051145"/>
<dbReference type="eggNOG" id="KOG3829">
    <property type="taxonomic scope" value="Eukaryota"/>
</dbReference>
<dbReference type="GeneTree" id="ENSGT00950000182951"/>
<dbReference type="HOGENOM" id="CLU_303709_0_0_1"/>
<dbReference type="InParanoid" id="A4VCL2"/>
<dbReference type="OMA" id="GQDHNEL"/>
<dbReference type="OrthoDB" id="8583677at2759"/>
<dbReference type="PhylomeDB" id="A4VCL2"/>
<dbReference type="Reactome" id="R-DME-381426">
    <property type="pathway name" value="Regulation of Insulin-like Growth Factor (IGF) transport and uptake by Insulin-like Growth Factor Binding Proteins (IGFBPs)"/>
</dbReference>
<dbReference type="Reactome" id="R-DME-8957275">
    <property type="pathway name" value="Post-translational protein phosphorylation"/>
</dbReference>
<dbReference type="BioGRID-ORCS" id="42784">
    <property type="hits" value="0 hits in 3 CRISPR screens"/>
</dbReference>
<dbReference type="ChiTaRS" id="CG31145">
    <property type="organism name" value="fly"/>
</dbReference>
<dbReference type="GenomeRNAi" id="42784"/>
<dbReference type="PRO" id="PR:A4VCL2"/>
<dbReference type="Proteomes" id="UP000000803">
    <property type="component" value="Chromosome 3R"/>
</dbReference>
<dbReference type="Bgee" id="FBgn0051145">
    <property type="expression patterns" value="Expressed in male accessory gland secondary cell (Drosophila) in male reproductive gland and 288 other cell types or tissues"/>
</dbReference>
<dbReference type="ExpressionAtlas" id="A4VCL2">
    <property type="expression patterns" value="baseline and differential"/>
</dbReference>
<dbReference type="GO" id="GO:0005576">
    <property type="term" value="C:extracellular region"/>
    <property type="evidence" value="ECO:0000314"/>
    <property type="project" value="FlyBase"/>
</dbReference>
<dbReference type="GO" id="GO:0005794">
    <property type="term" value="C:Golgi apparatus"/>
    <property type="evidence" value="ECO:0000314"/>
    <property type="project" value="FlyBase"/>
</dbReference>
<dbReference type="GO" id="GO:0000139">
    <property type="term" value="C:Golgi membrane"/>
    <property type="evidence" value="ECO:0007669"/>
    <property type="project" value="UniProtKB-SubCell"/>
</dbReference>
<dbReference type="GO" id="GO:0005524">
    <property type="term" value="F:ATP binding"/>
    <property type="evidence" value="ECO:0007669"/>
    <property type="project" value="UniProtKB-KW"/>
</dbReference>
<dbReference type="GO" id="GO:0046872">
    <property type="term" value="F:metal ion binding"/>
    <property type="evidence" value="ECO:0007669"/>
    <property type="project" value="UniProtKB-KW"/>
</dbReference>
<dbReference type="GO" id="GO:0004672">
    <property type="term" value="F:protein kinase activity"/>
    <property type="evidence" value="ECO:0000250"/>
    <property type="project" value="FlyBase"/>
</dbReference>
<dbReference type="GO" id="GO:0106310">
    <property type="term" value="F:protein serine kinase activity"/>
    <property type="evidence" value="ECO:0007669"/>
    <property type="project" value="RHEA"/>
</dbReference>
<dbReference type="GO" id="GO:0004674">
    <property type="term" value="F:protein serine/threonine kinase activity"/>
    <property type="evidence" value="ECO:0000318"/>
    <property type="project" value="GO_Central"/>
</dbReference>
<dbReference type="CDD" id="cd10314">
    <property type="entry name" value="FAM20_C"/>
    <property type="match status" value="1"/>
</dbReference>
<dbReference type="InterPro" id="IPR024869">
    <property type="entry name" value="FAM20"/>
</dbReference>
<dbReference type="InterPro" id="IPR009581">
    <property type="entry name" value="FAM20_C"/>
</dbReference>
<dbReference type="PANTHER" id="PTHR12450">
    <property type="entry name" value="DENTIN MATRIX PROTEIN 4 PROTEIN FAM20"/>
    <property type="match status" value="1"/>
</dbReference>
<dbReference type="PANTHER" id="PTHR12450:SF22">
    <property type="entry name" value="EXTRACELLULAR SERINE_THREONINE PROTEIN CG31145"/>
    <property type="match status" value="1"/>
</dbReference>
<dbReference type="Pfam" id="PF06702">
    <property type="entry name" value="Fam20C"/>
    <property type="match status" value="1"/>
</dbReference>
<reference key="1">
    <citation type="journal article" date="2000" name="Science">
        <title>The genome sequence of Drosophila melanogaster.</title>
        <authorList>
            <person name="Adams M.D."/>
            <person name="Celniker S.E."/>
            <person name="Holt R.A."/>
            <person name="Evans C.A."/>
            <person name="Gocayne J.D."/>
            <person name="Amanatides P.G."/>
            <person name="Scherer S.E."/>
            <person name="Li P.W."/>
            <person name="Hoskins R.A."/>
            <person name="Galle R.F."/>
            <person name="George R.A."/>
            <person name="Lewis S.E."/>
            <person name="Richards S."/>
            <person name="Ashburner M."/>
            <person name="Henderson S.N."/>
            <person name="Sutton G.G."/>
            <person name="Wortman J.R."/>
            <person name="Yandell M.D."/>
            <person name="Zhang Q."/>
            <person name="Chen L.X."/>
            <person name="Brandon R.C."/>
            <person name="Rogers Y.-H.C."/>
            <person name="Blazej R.G."/>
            <person name="Champe M."/>
            <person name="Pfeiffer B.D."/>
            <person name="Wan K.H."/>
            <person name="Doyle C."/>
            <person name="Baxter E.G."/>
            <person name="Helt G."/>
            <person name="Nelson C.R."/>
            <person name="Miklos G.L.G."/>
            <person name="Abril J.F."/>
            <person name="Agbayani A."/>
            <person name="An H.-J."/>
            <person name="Andrews-Pfannkoch C."/>
            <person name="Baldwin D."/>
            <person name="Ballew R.M."/>
            <person name="Basu A."/>
            <person name="Baxendale J."/>
            <person name="Bayraktaroglu L."/>
            <person name="Beasley E.M."/>
            <person name="Beeson K.Y."/>
            <person name="Benos P.V."/>
            <person name="Berman B.P."/>
            <person name="Bhandari D."/>
            <person name="Bolshakov S."/>
            <person name="Borkova D."/>
            <person name="Botchan M.R."/>
            <person name="Bouck J."/>
            <person name="Brokstein P."/>
            <person name="Brottier P."/>
            <person name="Burtis K.C."/>
            <person name="Busam D.A."/>
            <person name="Butler H."/>
            <person name="Cadieu E."/>
            <person name="Center A."/>
            <person name="Chandra I."/>
            <person name="Cherry J.M."/>
            <person name="Cawley S."/>
            <person name="Dahlke C."/>
            <person name="Davenport L.B."/>
            <person name="Davies P."/>
            <person name="de Pablos B."/>
            <person name="Delcher A."/>
            <person name="Deng Z."/>
            <person name="Mays A.D."/>
            <person name="Dew I."/>
            <person name="Dietz S.M."/>
            <person name="Dodson K."/>
            <person name="Doup L.E."/>
            <person name="Downes M."/>
            <person name="Dugan-Rocha S."/>
            <person name="Dunkov B.C."/>
            <person name="Dunn P."/>
            <person name="Durbin K.J."/>
            <person name="Evangelista C.C."/>
            <person name="Ferraz C."/>
            <person name="Ferriera S."/>
            <person name="Fleischmann W."/>
            <person name="Fosler C."/>
            <person name="Gabrielian A.E."/>
            <person name="Garg N.S."/>
            <person name="Gelbart W.M."/>
            <person name="Glasser K."/>
            <person name="Glodek A."/>
            <person name="Gong F."/>
            <person name="Gorrell J.H."/>
            <person name="Gu Z."/>
            <person name="Guan P."/>
            <person name="Harris M."/>
            <person name="Harris N.L."/>
            <person name="Harvey D.A."/>
            <person name="Heiman T.J."/>
            <person name="Hernandez J.R."/>
            <person name="Houck J."/>
            <person name="Hostin D."/>
            <person name="Houston K.A."/>
            <person name="Howland T.J."/>
            <person name="Wei M.-H."/>
            <person name="Ibegwam C."/>
            <person name="Jalali M."/>
            <person name="Kalush F."/>
            <person name="Karpen G.H."/>
            <person name="Ke Z."/>
            <person name="Kennison J.A."/>
            <person name="Ketchum K.A."/>
            <person name="Kimmel B.E."/>
            <person name="Kodira C.D."/>
            <person name="Kraft C.L."/>
            <person name="Kravitz S."/>
            <person name="Kulp D."/>
            <person name="Lai Z."/>
            <person name="Lasko P."/>
            <person name="Lei Y."/>
            <person name="Levitsky A.A."/>
            <person name="Li J.H."/>
            <person name="Li Z."/>
            <person name="Liang Y."/>
            <person name="Lin X."/>
            <person name="Liu X."/>
            <person name="Mattei B."/>
            <person name="McIntosh T.C."/>
            <person name="McLeod M.P."/>
            <person name="McPherson D."/>
            <person name="Merkulov G."/>
            <person name="Milshina N.V."/>
            <person name="Mobarry C."/>
            <person name="Morris J."/>
            <person name="Moshrefi A."/>
            <person name="Mount S.M."/>
            <person name="Moy M."/>
            <person name="Murphy B."/>
            <person name="Murphy L."/>
            <person name="Muzny D.M."/>
            <person name="Nelson D.L."/>
            <person name="Nelson D.R."/>
            <person name="Nelson K.A."/>
            <person name="Nixon K."/>
            <person name="Nusskern D.R."/>
            <person name="Pacleb J.M."/>
            <person name="Palazzolo M."/>
            <person name="Pittman G.S."/>
            <person name="Pan S."/>
            <person name="Pollard J."/>
            <person name="Puri V."/>
            <person name="Reese M.G."/>
            <person name="Reinert K."/>
            <person name="Remington K."/>
            <person name="Saunders R.D.C."/>
            <person name="Scheeler F."/>
            <person name="Shen H."/>
            <person name="Shue B.C."/>
            <person name="Siden-Kiamos I."/>
            <person name="Simpson M."/>
            <person name="Skupski M.P."/>
            <person name="Smith T.J."/>
            <person name="Spier E."/>
            <person name="Spradling A.C."/>
            <person name="Stapleton M."/>
            <person name="Strong R."/>
            <person name="Sun E."/>
            <person name="Svirskas R."/>
            <person name="Tector C."/>
            <person name="Turner R."/>
            <person name="Venter E."/>
            <person name="Wang A.H."/>
            <person name="Wang X."/>
            <person name="Wang Z.-Y."/>
            <person name="Wassarman D.A."/>
            <person name="Weinstock G.M."/>
            <person name="Weissenbach J."/>
            <person name="Williams S.M."/>
            <person name="Woodage T."/>
            <person name="Worley K.C."/>
            <person name="Wu D."/>
            <person name="Yang S."/>
            <person name="Yao Q.A."/>
            <person name="Ye J."/>
            <person name="Yeh R.-F."/>
            <person name="Zaveri J.S."/>
            <person name="Zhan M."/>
            <person name="Zhang G."/>
            <person name="Zhao Q."/>
            <person name="Zheng L."/>
            <person name="Zheng X.H."/>
            <person name="Zhong F.N."/>
            <person name="Zhong W."/>
            <person name="Zhou X."/>
            <person name="Zhu S.C."/>
            <person name="Zhu X."/>
            <person name="Smith H.O."/>
            <person name="Gibbs R.A."/>
            <person name="Myers E.W."/>
            <person name="Rubin G.M."/>
            <person name="Venter J.C."/>
        </authorList>
    </citation>
    <scope>NUCLEOTIDE SEQUENCE [LARGE SCALE GENOMIC DNA]</scope>
    <source>
        <strain>Berkeley</strain>
    </source>
</reference>
<reference key="2">
    <citation type="journal article" date="2002" name="Genome Biol.">
        <title>Annotation of the Drosophila melanogaster euchromatic genome: a systematic review.</title>
        <authorList>
            <person name="Misra S."/>
            <person name="Crosby M.A."/>
            <person name="Mungall C.J."/>
            <person name="Matthews B.B."/>
            <person name="Campbell K.S."/>
            <person name="Hradecky P."/>
            <person name="Huang Y."/>
            <person name="Kaminker J.S."/>
            <person name="Millburn G.H."/>
            <person name="Prochnik S.E."/>
            <person name="Smith C.D."/>
            <person name="Tupy J.L."/>
            <person name="Whitfield E.J."/>
            <person name="Bayraktaroglu L."/>
            <person name="Berman B.P."/>
            <person name="Bettencourt B.R."/>
            <person name="Celniker S.E."/>
            <person name="de Grey A.D.N.J."/>
            <person name="Drysdale R.A."/>
            <person name="Harris N.L."/>
            <person name="Richter J."/>
            <person name="Russo S."/>
            <person name="Schroeder A.J."/>
            <person name="Shu S.Q."/>
            <person name="Stapleton M."/>
            <person name="Yamada C."/>
            <person name="Ashburner M."/>
            <person name="Gelbart W.M."/>
            <person name="Rubin G.M."/>
            <person name="Lewis S.E."/>
        </authorList>
    </citation>
    <scope>GENOME REANNOTATION</scope>
    <source>
        <strain>Berkeley</strain>
    </source>
</reference>
<reference key="3">
    <citation type="submission" date="2007-04" db="EMBL/GenBank/DDBJ databases">
        <authorList>
            <person name="Stapleton M."/>
            <person name="Carlson J."/>
            <person name="Frise E."/>
            <person name="Kapadia B."/>
            <person name="Park S."/>
            <person name="Wan K."/>
            <person name="Yu C."/>
            <person name="Celniker S."/>
        </authorList>
    </citation>
    <scope>NUCLEOTIDE SEQUENCE [LARGE SCALE MRNA] (ISOFORMS A AND C)</scope>
</reference>
<reference key="4">
    <citation type="journal article" date="2012" name="PLoS ONE">
        <title>The Raine syndrome protein FAM20C is a Golgi kinase that phosphorylates bio-mineralization proteins.</title>
        <authorList>
            <person name="Ishikawa H.O."/>
            <person name="Xu A."/>
            <person name="Ogura E."/>
            <person name="Manning G."/>
            <person name="Irvine K.D."/>
        </authorList>
    </citation>
    <scope>SUBCELLULAR LOCATION</scope>
    <scope>TISSUE SPECIFICITY</scope>
</reference>
<proteinExistence type="evidence at transcript level"/>
<organism evidence="9">
    <name type="scientific">Drosophila melanogaster</name>
    <name type="common">Fruit fly</name>
    <dbReference type="NCBI Taxonomy" id="7227"/>
    <lineage>
        <taxon>Eukaryota</taxon>
        <taxon>Metazoa</taxon>
        <taxon>Ecdysozoa</taxon>
        <taxon>Arthropoda</taxon>
        <taxon>Hexapoda</taxon>
        <taxon>Insecta</taxon>
        <taxon>Pterygota</taxon>
        <taxon>Neoptera</taxon>
        <taxon>Endopterygota</taxon>
        <taxon>Diptera</taxon>
        <taxon>Brachycera</taxon>
        <taxon>Muscomorpha</taxon>
        <taxon>Ephydroidea</taxon>
        <taxon>Drosophilidae</taxon>
        <taxon>Drosophila</taxon>
        <taxon>Sophophora</taxon>
    </lineage>
</organism>
<feature type="propeptide" id="PRO_0000456171" evidence="1">
    <location>
        <begin position="1"/>
        <end position="76"/>
    </location>
</feature>
<feature type="chain" id="PRO_0000433617" description="Extracellular serine/threonine protein CG31145">
    <location>
        <begin position="77"/>
        <end position="528"/>
    </location>
</feature>
<feature type="topological domain" description="Cytoplasmic" evidence="8">
    <location>
        <begin position="1"/>
        <end position="12"/>
    </location>
</feature>
<feature type="transmembrane region" description="Helical" evidence="3">
    <location>
        <begin position="13"/>
        <end position="33"/>
    </location>
</feature>
<feature type="topological domain" description="Lumenal" evidence="8">
    <location>
        <begin position="34"/>
        <end position="528"/>
    </location>
</feature>
<feature type="region of interest" description="Disordered" evidence="5">
    <location>
        <begin position="77"/>
        <end position="130"/>
    </location>
</feature>
<feature type="compositionally biased region" description="Low complexity" evidence="5">
    <location>
        <begin position="86"/>
        <end position="107"/>
    </location>
</feature>
<feature type="active site" evidence="1">
    <location>
        <position position="408"/>
    </location>
</feature>
<feature type="binding site" evidence="2">
    <location>
        <position position="220"/>
    </location>
    <ligand>
        <name>ATP</name>
        <dbReference type="ChEBI" id="CHEBI:30616"/>
    </ligand>
</feature>
<feature type="binding site" evidence="2">
    <location>
        <position position="236"/>
    </location>
    <ligand>
        <name>ATP</name>
        <dbReference type="ChEBI" id="CHEBI:30616"/>
    </ligand>
</feature>
<feature type="binding site" evidence="2">
    <location>
        <position position="257"/>
    </location>
    <ligand>
        <name>ATP</name>
        <dbReference type="ChEBI" id="CHEBI:30616"/>
    </ligand>
</feature>
<feature type="binding site" evidence="2">
    <location>
        <position position="257"/>
    </location>
    <ligand>
        <name>Mn(2+)</name>
        <dbReference type="ChEBI" id="CHEBI:29035"/>
    </ligand>
</feature>
<feature type="binding site" evidence="2">
    <location>
        <begin position="339"/>
        <end position="342"/>
    </location>
    <ligand>
        <name>ATP</name>
        <dbReference type="ChEBI" id="CHEBI:30616"/>
    </ligand>
</feature>
<feature type="binding site" evidence="2">
    <location>
        <position position="413"/>
    </location>
    <ligand>
        <name>ATP</name>
        <dbReference type="ChEBI" id="CHEBI:30616"/>
    </ligand>
</feature>
<feature type="binding site" evidence="2">
    <location>
        <position position="428"/>
    </location>
    <ligand>
        <name>ATP</name>
        <dbReference type="ChEBI" id="CHEBI:30616"/>
    </ligand>
</feature>
<feature type="binding site" evidence="2">
    <location>
        <position position="428"/>
    </location>
    <ligand>
        <name>Mn(2+)</name>
        <dbReference type="ChEBI" id="CHEBI:29035"/>
    </ligand>
</feature>
<feature type="site" description="Cleavage; by S1P" evidence="1">
    <location>
        <begin position="76"/>
        <end position="77"/>
    </location>
</feature>
<feature type="glycosylation site" description="N-linked (GlcNAc...) asparagine" evidence="4">
    <location>
        <position position="79"/>
    </location>
</feature>
<feature type="glycosylation site" description="N-linked (GlcNAc...) asparagine" evidence="4">
    <location>
        <position position="173"/>
    </location>
</feature>
<feature type="glycosylation site" description="N-linked (GlcNAc...) asparagine" evidence="4">
    <location>
        <position position="286"/>
    </location>
</feature>
<feature type="glycosylation site" description="N-linked (GlcNAc...) asparagine" evidence="4">
    <location>
        <position position="420"/>
    </location>
</feature>
<feature type="disulfide bond" evidence="2">
    <location>
        <begin position="312"/>
        <end position="328"/>
    </location>
</feature>
<feature type="disulfide bond" evidence="2">
    <location>
        <begin position="317"/>
        <end position="321"/>
    </location>
</feature>
<feature type="disulfide bond" evidence="2">
    <location>
        <begin position="376"/>
        <end position="450"/>
    </location>
</feature>
<feature type="disulfide bond" evidence="2">
    <location>
        <begin position="451"/>
        <end position="510"/>
    </location>
</feature>
<feature type="splice variant" id="VSP_061589" description="In isoform C and isoform D.">
    <original>M</original>
    <variation>MSLASRTSVKSGGSEVDLRQRNASIRNLFAPSSAELAKKKEARQRSRSQSSFSLQRASSQDDGIGNGMGMGLGSKMGSQMGLPNSKSFDDYALGINQLPMTANQSAVRQYNGQDHNVLGSSPYAPASTRATALVIPRTSHNGCHQSAFELAMSRTPSEHKNWKSTSQLENFINSNEKLQQEQWQQHQQQDTSVDFGNEMTWGKSAEKSLPLNHLVQEEGFSRDDQWDLDFQTEQRESLQSQSYRPAVAAAAQSTPLAQRLQRFRYRQQLQLQQEPHQQQQQQQQQQQQQQSTADIDVYDSPFNGQLSAERIGVANWRRGNVEGPIGGRAPVEAEYSAEQEELPPDRVLYPDSEPEEEEAAPRRRVVIRRRIVRTSRTASQDPQTQTAEVVPKSSNDSSTPAEINGRNLGWLTRLRSFGSINRKHQETAAPPKGGQQKAISAASNNSCNTNPIM</variation>
    <location>
        <position position="1"/>
    </location>
</feature>
<feature type="splice variant" id="VSP_061590" description="In isoform D.">
    <original>D</original>
    <variation>E</variation>
    <location>
        <position position="463"/>
    </location>
</feature>
<feature type="splice variant" id="VSP_061591" description="In isoform D.">
    <location>
        <begin position="464"/>
        <end position="528"/>
    </location>
</feature>
<feature type="sequence conflict" description="In Ref. 3; ACO52094." evidence="8" ref="3">
    <original>M</original>
    <variation>H</variation>
    <location>
        <position position="238"/>
    </location>
</feature>
<sequence>MAVLRTMKLKERLVISLGATLVLLTLLLIVDVQMDFGVANRHLLQQQHQKIRLGNDYDGGTGGGGMLHEFKRKFLQKSNASGSKEASTQAGASQSGGATSGQDAAAGASGGAAGPGTSRSTSTRKPTPHDRYADLQKHLLSDEYSHVIVDNAPDVSRDNPTLAEMLHRKASANASNLERFQLRITKKELYGEQDTLVDAVLRDMIKLPIQHVVQKEGGTQLKLIIEYPNDIKALMKPMRFPREQQTLPNHFYFTDYERHNAEIAAFHLDRILGFRRAMPVAGRTLNITTEIYQLAEENLLKTFFVSPSLNLCFHGKCSYYCDTSHAICGNPDMLEGSFAAFLPNFESGNRKLWRHPWRRSYHKRKKAQWETDANYCALVRDIPPYDDGRRLYDLMDMAVFDFLTGNMDRHHYETFKVYGNETFPLHLDHGRGFGRPFHDELSILAPVLQCCLIRKSTLVKLLDFHNGPKPLSQLMSESLSQDPVSPVLWQPHLEALDRRTGIILQSIRDCIKRNPPGDVDGSETDVSS</sequence>